<gene>
    <name type="primary">TMEM132C</name>
</gene>
<name>T132C_HUMAN</name>
<dbReference type="EMBL" id="AC023595">
    <property type="status" value="NOT_ANNOTATED_CDS"/>
    <property type="molecule type" value="Genomic_DNA"/>
</dbReference>
<dbReference type="EMBL" id="AC061709">
    <property type="status" value="NOT_ANNOTATED_CDS"/>
    <property type="molecule type" value="Genomic_DNA"/>
</dbReference>
<dbReference type="EMBL" id="AC090424">
    <property type="status" value="NOT_ANNOTATED_CDS"/>
    <property type="molecule type" value="Genomic_DNA"/>
</dbReference>
<dbReference type="EMBL" id="AC107020">
    <property type="status" value="NOT_ANNOTATED_CDS"/>
    <property type="molecule type" value="Genomic_DNA"/>
</dbReference>
<dbReference type="EMBL" id="AC126612">
    <property type="status" value="NOT_ANNOTATED_CDS"/>
    <property type="molecule type" value="Genomic_DNA"/>
</dbReference>
<dbReference type="EMBL" id="AL122107">
    <property type="protein sequence ID" value="CAH10715.1"/>
    <property type="molecule type" value="mRNA"/>
</dbReference>
<dbReference type="EMBL" id="AL831921">
    <property type="protein sequence ID" value="CAD38581.1"/>
    <property type="molecule type" value="mRNA"/>
</dbReference>
<dbReference type="CCDS" id="CCDS45009.2"/>
<dbReference type="RefSeq" id="NP_001129575.2">
    <property type="nucleotide sequence ID" value="NM_001136103.3"/>
</dbReference>
<dbReference type="SMR" id="Q8N3T6"/>
<dbReference type="BioGRID" id="124930">
    <property type="interactions" value="3"/>
</dbReference>
<dbReference type="FunCoup" id="Q8N3T6">
    <property type="interactions" value="22"/>
</dbReference>
<dbReference type="IntAct" id="Q8N3T6">
    <property type="interactions" value="3"/>
</dbReference>
<dbReference type="STRING" id="9606.ENSP00000410852"/>
<dbReference type="GlyCosmos" id="Q8N3T6">
    <property type="glycosylation" value="3 sites, 1 glycan"/>
</dbReference>
<dbReference type="GlyGen" id="Q8N3T6">
    <property type="glycosylation" value="3 sites, 1 O-linked glycan (1 site)"/>
</dbReference>
<dbReference type="iPTMnet" id="Q8N3T6"/>
<dbReference type="PhosphoSitePlus" id="Q8N3T6"/>
<dbReference type="BioMuta" id="TMEM132C"/>
<dbReference type="DMDM" id="288558838"/>
<dbReference type="MassIVE" id="Q8N3T6"/>
<dbReference type="PaxDb" id="9606-ENSP00000410852"/>
<dbReference type="PeptideAtlas" id="Q8N3T6"/>
<dbReference type="ProteomicsDB" id="71834"/>
<dbReference type="Antibodypedia" id="2660">
    <property type="antibodies" value="16 antibodies from 8 providers"/>
</dbReference>
<dbReference type="DNASU" id="92293"/>
<dbReference type="Ensembl" id="ENST00000435159.3">
    <property type="protein sequence ID" value="ENSP00000410852.2"/>
    <property type="gene ID" value="ENSG00000181234.10"/>
</dbReference>
<dbReference type="GeneID" id="92293"/>
<dbReference type="KEGG" id="hsa:92293"/>
<dbReference type="MANE-Select" id="ENST00000435159.3">
    <property type="protein sequence ID" value="ENSP00000410852.2"/>
    <property type="RefSeq nucleotide sequence ID" value="NM_001136103.3"/>
    <property type="RefSeq protein sequence ID" value="NP_001129575.2"/>
</dbReference>
<dbReference type="UCSC" id="uc021rgn.1">
    <property type="organism name" value="human"/>
</dbReference>
<dbReference type="AGR" id="HGNC:25436"/>
<dbReference type="CTD" id="92293"/>
<dbReference type="DisGeNET" id="92293"/>
<dbReference type="GeneCards" id="TMEM132C"/>
<dbReference type="HGNC" id="HGNC:25436">
    <property type="gene designation" value="TMEM132C"/>
</dbReference>
<dbReference type="HPA" id="ENSG00000181234">
    <property type="expression patterns" value="Tissue enhanced (adipose)"/>
</dbReference>
<dbReference type="neXtProt" id="NX_Q8N3T6"/>
<dbReference type="OpenTargets" id="ENSG00000181234"/>
<dbReference type="PharmGKB" id="PA143485653"/>
<dbReference type="VEuPathDB" id="HostDB:ENSG00000181234"/>
<dbReference type="eggNOG" id="KOG4789">
    <property type="taxonomic scope" value="Eukaryota"/>
</dbReference>
<dbReference type="GeneTree" id="ENSGT00940000154702"/>
<dbReference type="HOGENOM" id="CLU_009871_0_0_1"/>
<dbReference type="InParanoid" id="Q8N3T6"/>
<dbReference type="OMA" id="VYEVFSW"/>
<dbReference type="OrthoDB" id="10026202at2759"/>
<dbReference type="PAN-GO" id="Q8N3T6">
    <property type="GO annotations" value="0 GO annotations based on evolutionary models"/>
</dbReference>
<dbReference type="PhylomeDB" id="Q8N3T6"/>
<dbReference type="TreeFam" id="TF314981"/>
<dbReference type="PathwayCommons" id="Q8N3T6"/>
<dbReference type="SignaLink" id="Q8N3T6"/>
<dbReference type="BioGRID-ORCS" id="92293">
    <property type="hits" value="6 hits in 282 CRISPR screens"/>
</dbReference>
<dbReference type="ChiTaRS" id="TMEM132C">
    <property type="organism name" value="human"/>
</dbReference>
<dbReference type="GenomeRNAi" id="92293"/>
<dbReference type="Pharos" id="Q8N3T6">
    <property type="development level" value="Tdark"/>
</dbReference>
<dbReference type="PRO" id="PR:Q8N3T6"/>
<dbReference type="Proteomes" id="UP000005640">
    <property type="component" value="Chromosome 12"/>
</dbReference>
<dbReference type="RNAct" id="Q8N3T6">
    <property type="molecule type" value="protein"/>
</dbReference>
<dbReference type="Bgee" id="ENSG00000181234">
    <property type="expression patterns" value="Expressed in decidua and 154 other cell types or tissues"/>
</dbReference>
<dbReference type="GO" id="GO:0016020">
    <property type="term" value="C:membrane"/>
    <property type="evidence" value="ECO:0007669"/>
    <property type="project" value="UniProtKB-SubCell"/>
</dbReference>
<dbReference type="InterPro" id="IPR055422">
    <property type="entry name" value="Ig_TMEM132_2nd"/>
</dbReference>
<dbReference type="InterPro" id="IPR055423">
    <property type="entry name" value="Ig_TMEM132_5th"/>
</dbReference>
<dbReference type="InterPro" id="IPR055424">
    <property type="entry name" value="Ig_TMEM132_6th"/>
</dbReference>
<dbReference type="InterPro" id="IPR026307">
    <property type="entry name" value="TMEM132"/>
</dbReference>
<dbReference type="InterPro" id="IPR055421">
    <property type="entry name" value="TMEM132_3rd"/>
</dbReference>
<dbReference type="InterPro" id="IPR031436">
    <property type="entry name" value="TMEM132_C"/>
</dbReference>
<dbReference type="InterPro" id="IPR031437">
    <property type="entry name" value="TMEM132_M"/>
</dbReference>
<dbReference type="InterPro" id="IPR031435">
    <property type="entry name" value="TMEM132_N"/>
</dbReference>
<dbReference type="PANTHER" id="PTHR13388">
    <property type="entry name" value="DETONATOR, ISOFORM E"/>
    <property type="match status" value="1"/>
</dbReference>
<dbReference type="PANTHER" id="PTHR13388:SF4">
    <property type="entry name" value="TRANSMEMBRANE PROTEIN 132C"/>
    <property type="match status" value="1"/>
</dbReference>
<dbReference type="Pfam" id="PF23481">
    <property type="entry name" value="Ig_TMEM132_2nd"/>
    <property type="match status" value="1"/>
</dbReference>
<dbReference type="Pfam" id="PF16070">
    <property type="entry name" value="Ig_TMEM132_4th"/>
    <property type="match status" value="1"/>
</dbReference>
<dbReference type="Pfam" id="PF23486">
    <property type="entry name" value="Ig_TMEM132_5th"/>
    <property type="match status" value="1"/>
</dbReference>
<dbReference type="Pfam" id="PF23487">
    <property type="entry name" value="Ig_TMEM132_6th"/>
    <property type="match status" value="1"/>
</dbReference>
<dbReference type="Pfam" id="PF23039">
    <property type="entry name" value="TMEM132_3rd"/>
    <property type="match status" value="1"/>
</dbReference>
<dbReference type="Pfam" id="PF15706">
    <property type="entry name" value="TMEM132_C"/>
    <property type="match status" value="1"/>
</dbReference>
<dbReference type="Pfam" id="PF15705">
    <property type="entry name" value="TMEM132_N"/>
    <property type="match status" value="1"/>
</dbReference>
<accession>Q8N3T6</accession>
<accession>Q69YX8</accession>
<feature type="signal peptide" evidence="1">
    <location>
        <begin position="1"/>
        <end position="27"/>
    </location>
</feature>
<feature type="chain" id="PRO_0000324577" description="Transmembrane protein 132C">
    <location>
        <begin position="28"/>
        <end position="1108"/>
    </location>
</feature>
<feature type="topological domain" description="Extracellular" evidence="1">
    <location>
        <begin position="28"/>
        <end position="922"/>
    </location>
</feature>
<feature type="transmembrane region" description="Helical" evidence="1">
    <location>
        <begin position="923"/>
        <end position="943"/>
    </location>
</feature>
<feature type="topological domain" description="Cytoplasmic" evidence="1">
    <location>
        <begin position="944"/>
        <end position="1108"/>
    </location>
</feature>
<feature type="region of interest" description="Disordered" evidence="2">
    <location>
        <begin position="820"/>
        <end position="857"/>
    </location>
</feature>
<feature type="region of interest" description="Disordered" evidence="2">
    <location>
        <begin position="1022"/>
        <end position="1072"/>
    </location>
</feature>
<feature type="compositionally biased region" description="Basic and acidic residues" evidence="2">
    <location>
        <begin position="820"/>
        <end position="836"/>
    </location>
</feature>
<feature type="glycosylation site" description="N-linked (GlcNAc...) asparagine" evidence="1">
    <location>
        <position position="316"/>
    </location>
</feature>
<feature type="glycosylation site" description="N-linked (GlcNAc...) asparagine" evidence="1">
    <location>
        <position position="373"/>
    </location>
</feature>
<feature type="sequence variant" id="VAR_039832" description="In dbSNP:rs11059681.">
    <original>H</original>
    <variation>R</variation>
    <location>
        <position position="161"/>
    </location>
</feature>
<feature type="sequence variant" id="VAR_039833" description="In dbSNP:rs12307622.">
    <original>V</original>
    <variation>M</variation>
    <location>
        <position position="232"/>
    </location>
</feature>
<feature type="sequence variant" id="VAR_039834" description="In dbSNP:rs1683723.">
    <original>V</original>
    <variation>I</variation>
    <location>
        <position position="272"/>
    </location>
</feature>
<feature type="sequence variant" id="VAR_039835" description="In dbSNP:rs4272850.">
    <original>V</original>
    <variation>I</variation>
    <location>
        <position position="444"/>
    </location>
</feature>
<feature type="sequence variant" id="VAR_039836" description="In dbSNP:rs12426596.">
    <original>T</original>
    <variation>S</variation>
    <location>
        <position position="730"/>
    </location>
</feature>
<feature type="sequence variant" id="VAR_039837" description="In dbSNP:rs12301587.">
    <original>F</original>
    <variation>I</variation>
    <location>
        <position position="799"/>
    </location>
</feature>
<feature type="sequence variant" id="VAR_039838" description="In dbSNP:rs12424159.">
    <original>G</original>
    <variation>R</variation>
    <location>
        <position position="810"/>
    </location>
</feature>
<sequence>MRSEGAAPGPAAPLCGALSLLLGALLGKVIEGHGVTDNIQRFSSLPPYLPVSYHILRAETSFFLKEANQDLLRNSSLQARVESFFTYKTRQPPVLNASYGPFSVEKVVPLDLMLTSNFLGPTNKFSFDWKLKAHILRDKVYLSRPKVQVLFHIMGRDWDDHGAGEKLPCLRVFAFRETREVRGSCRLKGDLGLCVAELELLSSWFSAPTVGAGRKKSMDQPEGTPVELYYTVHPGNERGDCAGGDFRKGNAIRPGKDGLEETTSHLQRIGTVGLYRAQDSAQLSELRLDGNVVIWLPSRPVKQGEVVTAYVTISSNSSVDLFILRAKVKKGVNILSAQTREPRQWGVKQEVGSGGKHVTATVACQRLGPSPRNRSSSLFNEVVQMNFEIASFSSLSGTQPITWQVEYPRKGTTDIAVSEIFVSQKDLVGIVPLAMDTEILNTAVLTGKTVAMPIKVVSVEENSAVMDISESVECKSTDEDVIKVSERCDYIFVNGKEIKGKMDAVVNFTYQYLSAPLCVTVWVPRLPLQIEVSDTELSQIKGWRVPIVTNKRPTRESEDEDEEERRGRGCALQYQHATVRVLTQFVSEGAGPWGQPNYLLSPNWQFDITHLVADFMKLEEPHVATLQDSRVLVGREVGMTTIQVLSPLSDSILAEKTITVLDDKVSVTDLAIQLVAGLSVALYPNAENSKAVTAVVTAEEVLRTPKQEAVFSTWLQFSDGSVTPLDIYDTKDFSLAATSQDEAVVSVPQPRSPRWPVVVAEGEGQGPLIRVDMTIAEACQKSKRKSILAVGVGNVRVKFGQNDADSSPGGDYEEDEIKNHASDRRQKGQHHERTGQDGHLYGSSPVEREEGALRRATTTARSLLDNKVVKNSRADGGRLAGEGQLQNIPIDFTNFPAHVDLPKAGSGLEENDLVQTPRGLSDLEIGMYALLGVFCLAILVFLINCATFALKYRHKQVPLEGQASMTHSHDWVWLGNEAELLESMGDAPPPQDEHTTIIDRGPGACEESNHLLLNGGSHKHVQSQIHRSADSGGRQGREQKQDPLHSPTSKRKKVKFTTFTTIPPDDSCPTVNSIVSSNDEDIKWVCQDVAVGAPKELRNYLEKLKDKA</sequence>
<proteinExistence type="evidence at protein level"/>
<evidence type="ECO:0000255" key="1"/>
<evidence type="ECO:0000256" key="2">
    <source>
        <dbReference type="SAM" id="MobiDB-lite"/>
    </source>
</evidence>
<evidence type="ECO:0000305" key="3"/>
<protein>
    <recommendedName>
        <fullName>Transmembrane protein 132C</fullName>
    </recommendedName>
</protein>
<reference key="1">
    <citation type="journal article" date="2006" name="Nature">
        <title>The finished DNA sequence of human chromosome 12.</title>
        <authorList>
            <person name="Scherer S.E."/>
            <person name="Muzny D.M."/>
            <person name="Buhay C.J."/>
            <person name="Chen R."/>
            <person name="Cree A."/>
            <person name="Ding Y."/>
            <person name="Dugan-Rocha S."/>
            <person name="Gill R."/>
            <person name="Gunaratne P."/>
            <person name="Harris R.A."/>
            <person name="Hawes A.C."/>
            <person name="Hernandez J."/>
            <person name="Hodgson A.V."/>
            <person name="Hume J."/>
            <person name="Jackson A."/>
            <person name="Khan Z.M."/>
            <person name="Kovar-Smith C."/>
            <person name="Lewis L.R."/>
            <person name="Lozado R.J."/>
            <person name="Metzker M.L."/>
            <person name="Milosavljevic A."/>
            <person name="Miner G.R."/>
            <person name="Montgomery K.T."/>
            <person name="Morgan M.B."/>
            <person name="Nazareth L.V."/>
            <person name="Scott G."/>
            <person name="Sodergren E."/>
            <person name="Song X.-Z."/>
            <person name="Steffen D."/>
            <person name="Lovering R.C."/>
            <person name="Wheeler D.A."/>
            <person name="Worley K.C."/>
            <person name="Yuan Y."/>
            <person name="Zhang Z."/>
            <person name="Adams C.Q."/>
            <person name="Ansari-Lari M.A."/>
            <person name="Ayele M."/>
            <person name="Brown M.J."/>
            <person name="Chen G."/>
            <person name="Chen Z."/>
            <person name="Clerc-Blankenburg K.P."/>
            <person name="Davis C."/>
            <person name="Delgado O."/>
            <person name="Dinh H.H."/>
            <person name="Draper H."/>
            <person name="Gonzalez-Garay M.L."/>
            <person name="Havlak P."/>
            <person name="Jackson L.R."/>
            <person name="Jacob L.S."/>
            <person name="Kelly S.H."/>
            <person name="Li L."/>
            <person name="Li Z."/>
            <person name="Liu J."/>
            <person name="Liu W."/>
            <person name="Lu J."/>
            <person name="Maheshwari M."/>
            <person name="Nguyen B.-V."/>
            <person name="Okwuonu G.O."/>
            <person name="Pasternak S."/>
            <person name="Perez L.M."/>
            <person name="Plopper F.J.H."/>
            <person name="Santibanez J."/>
            <person name="Shen H."/>
            <person name="Tabor P.E."/>
            <person name="Verduzco D."/>
            <person name="Waldron L."/>
            <person name="Wang Q."/>
            <person name="Williams G.A."/>
            <person name="Zhang J."/>
            <person name="Zhou J."/>
            <person name="Allen C.C."/>
            <person name="Amin A.G."/>
            <person name="Anyalebechi V."/>
            <person name="Bailey M."/>
            <person name="Barbaria J.A."/>
            <person name="Bimage K.E."/>
            <person name="Bryant N.P."/>
            <person name="Burch P.E."/>
            <person name="Burkett C.E."/>
            <person name="Burrell K.L."/>
            <person name="Calderon E."/>
            <person name="Cardenas V."/>
            <person name="Carter K."/>
            <person name="Casias K."/>
            <person name="Cavazos I."/>
            <person name="Cavazos S.R."/>
            <person name="Ceasar H."/>
            <person name="Chacko J."/>
            <person name="Chan S.N."/>
            <person name="Chavez D."/>
            <person name="Christopoulos C."/>
            <person name="Chu J."/>
            <person name="Cockrell R."/>
            <person name="Cox C.D."/>
            <person name="Dang M."/>
            <person name="Dathorne S.R."/>
            <person name="David R."/>
            <person name="Davis C.M."/>
            <person name="Davy-Carroll L."/>
            <person name="Deshazo D.R."/>
            <person name="Donlin J.E."/>
            <person name="D'Souza L."/>
            <person name="Eaves K.A."/>
            <person name="Egan A."/>
            <person name="Emery-Cohen A.J."/>
            <person name="Escotto M."/>
            <person name="Flagg N."/>
            <person name="Forbes L.D."/>
            <person name="Gabisi A.M."/>
            <person name="Garza M."/>
            <person name="Hamilton C."/>
            <person name="Henderson N."/>
            <person name="Hernandez O."/>
            <person name="Hines S."/>
            <person name="Hogues M.E."/>
            <person name="Huang M."/>
            <person name="Idlebird D.G."/>
            <person name="Johnson R."/>
            <person name="Jolivet A."/>
            <person name="Jones S."/>
            <person name="Kagan R."/>
            <person name="King L.M."/>
            <person name="Leal B."/>
            <person name="Lebow H."/>
            <person name="Lee S."/>
            <person name="LeVan J.M."/>
            <person name="Lewis L.C."/>
            <person name="London P."/>
            <person name="Lorensuhewa L.M."/>
            <person name="Loulseged H."/>
            <person name="Lovett D.A."/>
            <person name="Lucier A."/>
            <person name="Lucier R.L."/>
            <person name="Ma J."/>
            <person name="Madu R.C."/>
            <person name="Mapua P."/>
            <person name="Martindale A.D."/>
            <person name="Martinez E."/>
            <person name="Massey E."/>
            <person name="Mawhiney S."/>
            <person name="Meador M.G."/>
            <person name="Mendez S."/>
            <person name="Mercado C."/>
            <person name="Mercado I.C."/>
            <person name="Merritt C.E."/>
            <person name="Miner Z.L."/>
            <person name="Minja E."/>
            <person name="Mitchell T."/>
            <person name="Mohabbat F."/>
            <person name="Mohabbat K."/>
            <person name="Montgomery B."/>
            <person name="Moore N."/>
            <person name="Morris S."/>
            <person name="Munidasa M."/>
            <person name="Ngo R.N."/>
            <person name="Nguyen N.B."/>
            <person name="Nickerson E."/>
            <person name="Nwaokelemeh O.O."/>
            <person name="Nwokenkwo S."/>
            <person name="Obregon M."/>
            <person name="Oguh M."/>
            <person name="Oragunye N."/>
            <person name="Oviedo R.J."/>
            <person name="Parish B.J."/>
            <person name="Parker D.N."/>
            <person name="Parrish J."/>
            <person name="Parks K.L."/>
            <person name="Paul H.A."/>
            <person name="Payton B.A."/>
            <person name="Perez A."/>
            <person name="Perrin W."/>
            <person name="Pickens A."/>
            <person name="Primus E.L."/>
            <person name="Pu L.-L."/>
            <person name="Puazo M."/>
            <person name="Quiles M.M."/>
            <person name="Quiroz J.B."/>
            <person name="Rabata D."/>
            <person name="Reeves K."/>
            <person name="Ruiz S.J."/>
            <person name="Shao H."/>
            <person name="Sisson I."/>
            <person name="Sonaike T."/>
            <person name="Sorelle R.P."/>
            <person name="Sutton A.E."/>
            <person name="Svatek A.F."/>
            <person name="Svetz L.A."/>
            <person name="Tamerisa K.S."/>
            <person name="Taylor T.R."/>
            <person name="Teague B."/>
            <person name="Thomas N."/>
            <person name="Thorn R.D."/>
            <person name="Trejos Z.Y."/>
            <person name="Trevino B.K."/>
            <person name="Ukegbu O.N."/>
            <person name="Urban J.B."/>
            <person name="Vasquez L.I."/>
            <person name="Vera V.A."/>
            <person name="Villasana D.M."/>
            <person name="Wang L."/>
            <person name="Ward-Moore S."/>
            <person name="Warren J.T."/>
            <person name="Wei X."/>
            <person name="White F."/>
            <person name="Williamson A.L."/>
            <person name="Wleczyk R."/>
            <person name="Wooden H.S."/>
            <person name="Wooden S.H."/>
            <person name="Yen J."/>
            <person name="Yoon L."/>
            <person name="Yoon V."/>
            <person name="Zorrilla S.E."/>
            <person name="Nelson D."/>
            <person name="Kucherlapati R."/>
            <person name="Weinstock G."/>
            <person name="Gibbs R.A."/>
        </authorList>
    </citation>
    <scope>NUCLEOTIDE SEQUENCE [LARGE SCALE GENOMIC DNA]</scope>
</reference>
<reference key="2">
    <citation type="journal article" date="2007" name="BMC Genomics">
        <title>The full-ORF clone resource of the German cDNA consortium.</title>
        <authorList>
            <person name="Bechtel S."/>
            <person name="Rosenfelder H."/>
            <person name="Duda A."/>
            <person name="Schmidt C.P."/>
            <person name="Ernst U."/>
            <person name="Wellenreuther R."/>
            <person name="Mehrle A."/>
            <person name="Schuster C."/>
            <person name="Bahr A."/>
            <person name="Bloecker H."/>
            <person name="Heubner D."/>
            <person name="Hoerlein A."/>
            <person name="Michel G."/>
            <person name="Wedler H."/>
            <person name="Koehrer K."/>
            <person name="Ottenwaelder B."/>
            <person name="Poustka A."/>
            <person name="Wiemann S."/>
            <person name="Schupp I."/>
        </authorList>
    </citation>
    <scope>NUCLEOTIDE SEQUENCE [LARGE SCALE MRNA] OF 386-1108</scope>
    <source>
        <tissue>Amygdala</tissue>
        <tissue>Testis</tissue>
    </source>
</reference>
<organism>
    <name type="scientific">Homo sapiens</name>
    <name type="common">Human</name>
    <dbReference type="NCBI Taxonomy" id="9606"/>
    <lineage>
        <taxon>Eukaryota</taxon>
        <taxon>Metazoa</taxon>
        <taxon>Chordata</taxon>
        <taxon>Craniata</taxon>
        <taxon>Vertebrata</taxon>
        <taxon>Euteleostomi</taxon>
        <taxon>Mammalia</taxon>
        <taxon>Eutheria</taxon>
        <taxon>Euarchontoglires</taxon>
        <taxon>Primates</taxon>
        <taxon>Haplorrhini</taxon>
        <taxon>Catarrhini</taxon>
        <taxon>Hominidae</taxon>
        <taxon>Homo</taxon>
    </lineage>
</organism>
<comment type="subcellular location">
    <subcellularLocation>
        <location evidence="3">Membrane</location>
        <topology evidence="3">Single-pass type I membrane protein</topology>
    </subcellularLocation>
</comment>
<comment type="similarity">
    <text evidence="3">Belongs to the TMEM132 family.</text>
</comment>
<keyword id="KW-0325">Glycoprotein</keyword>
<keyword id="KW-0472">Membrane</keyword>
<keyword id="KW-1267">Proteomics identification</keyword>
<keyword id="KW-1185">Reference proteome</keyword>
<keyword id="KW-0732">Signal</keyword>
<keyword id="KW-0812">Transmembrane</keyword>
<keyword id="KW-1133">Transmembrane helix</keyword>